<gene>
    <name evidence="1" type="primary">rnhB</name>
    <name type="ordered locus">APH_1022</name>
</gene>
<feature type="chain" id="PRO_1000057375" description="Ribonuclease HII">
    <location>
        <begin position="1"/>
        <end position="210"/>
    </location>
</feature>
<feature type="domain" description="RNase H type-2" evidence="2">
    <location>
        <begin position="16"/>
        <end position="207"/>
    </location>
</feature>
<feature type="binding site" evidence="1">
    <location>
        <position position="22"/>
    </location>
    <ligand>
        <name>a divalent metal cation</name>
        <dbReference type="ChEBI" id="CHEBI:60240"/>
    </ligand>
</feature>
<feature type="binding site" evidence="1">
    <location>
        <position position="23"/>
    </location>
    <ligand>
        <name>a divalent metal cation</name>
        <dbReference type="ChEBI" id="CHEBI:60240"/>
    </ligand>
</feature>
<feature type="binding site" evidence="1">
    <location>
        <position position="116"/>
    </location>
    <ligand>
        <name>a divalent metal cation</name>
        <dbReference type="ChEBI" id="CHEBI:60240"/>
    </ligand>
</feature>
<reference key="1">
    <citation type="journal article" date="2006" name="PLoS Genet.">
        <title>Comparative genomics of emerging human ehrlichiosis agents.</title>
        <authorList>
            <person name="Dunning Hotopp J.C."/>
            <person name="Lin M."/>
            <person name="Madupu R."/>
            <person name="Crabtree J."/>
            <person name="Angiuoli S.V."/>
            <person name="Eisen J.A."/>
            <person name="Seshadri R."/>
            <person name="Ren Q."/>
            <person name="Wu M."/>
            <person name="Utterback T.R."/>
            <person name="Smith S."/>
            <person name="Lewis M."/>
            <person name="Khouri H."/>
            <person name="Zhang C."/>
            <person name="Niu H."/>
            <person name="Lin Q."/>
            <person name="Ohashi N."/>
            <person name="Zhi N."/>
            <person name="Nelson W.C."/>
            <person name="Brinkac L.M."/>
            <person name="Dodson R.J."/>
            <person name="Rosovitz M.J."/>
            <person name="Sundaram J.P."/>
            <person name="Daugherty S.C."/>
            <person name="Davidsen T."/>
            <person name="Durkin A.S."/>
            <person name="Gwinn M.L."/>
            <person name="Haft D.H."/>
            <person name="Selengut J.D."/>
            <person name="Sullivan S.A."/>
            <person name="Zafar N."/>
            <person name="Zhou L."/>
            <person name="Benahmed F."/>
            <person name="Forberger H."/>
            <person name="Halpin R."/>
            <person name="Mulligan S."/>
            <person name="Robinson J."/>
            <person name="White O."/>
            <person name="Rikihisa Y."/>
            <person name="Tettelin H."/>
        </authorList>
    </citation>
    <scope>NUCLEOTIDE SEQUENCE [LARGE SCALE GENOMIC DNA]</scope>
    <source>
        <strain>HZ</strain>
    </source>
</reference>
<protein>
    <recommendedName>
        <fullName evidence="1">Ribonuclease HII</fullName>
        <shortName evidence="1">RNase HII</shortName>
        <ecNumber evidence="1">3.1.26.4</ecNumber>
    </recommendedName>
</protein>
<proteinExistence type="inferred from homology"/>
<comment type="function">
    <text evidence="1">Endonuclease that specifically degrades the RNA of RNA-DNA hybrids.</text>
</comment>
<comment type="catalytic activity">
    <reaction evidence="1">
        <text>Endonucleolytic cleavage to 5'-phosphomonoester.</text>
        <dbReference type="EC" id="3.1.26.4"/>
    </reaction>
</comment>
<comment type="cofactor">
    <cofactor evidence="1">
        <name>Mn(2+)</name>
        <dbReference type="ChEBI" id="CHEBI:29035"/>
    </cofactor>
    <cofactor evidence="1">
        <name>Mg(2+)</name>
        <dbReference type="ChEBI" id="CHEBI:18420"/>
    </cofactor>
    <text evidence="1">Manganese or magnesium. Binds 1 divalent metal ion per monomer in the absence of substrate. May bind a second metal ion after substrate binding.</text>
</comment>
<comment type="subcellular location">
    <subcellularLocation>
        <location evidence="1">Cytoplasm</location>
    </subcellularLocation>
</comment>
<comment type="similarity">
    <text evidence="1">Belongs to the RNase HII family.</text>
</comment>
<accession>Q2GJ70</accession>
<evidence type="ECO:0000255" key="1">
    <source>
        <dbReference type="HAMAP-Rule" id="MF_00052"/>
    </source>
</evidence>
<evidence type="ECO:0000255" key="2">
    <source>
        <dbReference type="PROSITE-ProRule" id="PRU01319"/>
    </source>
</evidence>
<organism>
    <name type="scientific">Anaplasma phagocytophilum (strain HZ)</name>
    <dbReference type="NCBI Taxonomy" id="212042"/>
    <lineage>
        <taxon>Bacteria</taxon>
        <taxon>Pseudomonadati</taxon>
        <taxon>Pseudomonadota</taxon>
        <taxon>Alphaproteobacteria</taxon>
        <taxon>Rickettsiales</taxon>
        <taxon>Anaplasmataceae</taxon>
        <taxon>Anaplasma</taxon>
        <taxon>phagocytophilum group</taxon>
    </lineage>
</organism>
<keyword id="KW-0963">Cytoplasm</keyword>
<keyword id="KW-0255">Endonuclease</keyword>
<keyword id="KW-0378">Hydrolase</keyword>
<keyword id="KW-0464">Manganese</keyword>
<keyword id="KW-0479">Metal-binding</keyword>
<keyword id="KW-0540">Nuclease</keyword>
<name>RNH2_ANAPZ</name>
<dbReference type="EC" id="3.1.26.4" evidence="1"/>
<dbReference type="EMBL" id="CP000235">
    <property type="protein sequence ID" value="ABD44139.1"/>
    <property type="molecule type" value="Genomic_DNA"/>
</dbReference>
<dbReference type="RefSeq" id="WP_011451094.1">
    <property type="nucleotide sequence ID" value="NC_007797.1"/>
</dbReference>
<dbReference type="SMR" id="Q2GJ70"/>
<dbReference type="STRING" id="212042.APH_1022"/>
<dbReference type="PaxDb" id="212042-APH_1022"/>
<dbReference type="EnsemblBacteria" id="ABD44139">
    <property type="protein sequence ID" value="ABD44139"/>
    <property type="gene ID" value="APH_1022"/>
</dbReference>
<dbReference type="KEGG" id="aph:APH_1022"/>
<dbReference type="eggNOG" id="COG0164">
    <property type="taxonomic scope" value="Bacteria"/>
</dbReference>
<dbReference type="HOGENOM" id="CLU_036532_3_2_5"/>
<dbReference type="Proteomes" id="UP000001943">
    <property type="component" value="Chromosome"/>
</dbReference>
<dbReference type="GO" id="GO:0005737">
    <property type="term" value="C:cytoplasm"/>
    <property type="evidence" value="ECO:0007669"/>
    <property type="project" value="UniProtKB-SubCell"/>
</dbReference>
<dbReference type="GO" id="GO:0032299">
    <property type="term" value="C:ribonuclease H2 complex"/>
    <property type="evidence" value="ECO:0007669"/>
    <property type="project" value="TreeGrafter"/>
</dbReference>
<dbReference type="GO" id="GO:0030145">
    <property type="term" value="F:manganese ion binding"/>
    <property type="evidence" value="ECO:0007669"/>
    <property type="project" value="UniProtKB-UniRule"/>
</dbReference>
<dbReference type="GO" id="GO:0003723">
    <property type="term" value="F:RNA binding"/>
    <property type="evidence" value="ECO:0007669"/>
    <property type="project" value="InterPro"/>
</dbReference>
<dbReference type="GO" id="GO:0004523">
    <property type="term" value="F:RNA-DNA hybrid ribonuclease activity"/>
    <property type="evidence" value="ECO:0007669"/>
    <property type="project" value="UniProtKB-UniRule"/>
</dbReference>
<dbReference type="GO" id="GO:0043137">
    <property type="term" value="P:DNA replication, removal of RNA primer"/>
    <property type="evidence" value="ECO:0007669"/>
    <property type="project" value="TreeGrafter"/>
</dbReference>
<dbReference type="GO" id="GO:0006298">
    <property type="term" value="P:mismatch repair"/>
    <property type="evidence" value="ECO:0007669"/>
    <property type="project" value="TreeGrafter"/>
</dbReference>
<dbReference type="CDD" id="cd07182">
    <property type="entry name" value="RNase_HII_bacteria_HII_like"/>
    <property type="match status" value="1"/>
</dbReference>
<dbReference type="Gene3D" id="3.30.420.10">
    <property type="entry name" value="Ribonuclease H-like superfamily/Ribonuclease H"/>
    <property type="match status" value="1"/>
</dbReference>
<dbReference type="HAMAP" id="MF_00052_B">
    <property type="entry name" value="RNase_HII_B"/>
    <property type="match status" value="1"/>
</dbReference>
<dbReference type="InterPro" id="IPR022898">
    <property type="entry name" value="RNase_HII"/>
</dbReference>
<dbReference type="InterPro" id="IPR001352">
    <property type="entry name" value="RNase_HII/HIII"/>
</dbReference>
<dbReference type="InterPro" id="IPR024567">
    <property type="entry name" value="RNase_HII/HIII_dom"/>
</dbReference>
<dbReference type="InterPro" id="IPR012337">
    <property type="entry name" value="RNaseH-like_sf"/>
</dbReference>
<dbReference type="InterPro" id="IPR036397">
    <property type="entry name" value="RNaseH_sf"/>
</dbReference>
<dbReference type="NCBIfam" id="NF000595">
    <property type="entry name" value="PRK00015.1-3"/>
    <property type="match status" value="1"/>
</dbReference>
<dbReference type="PANTHER" id="PTHR10954">
    <property type="entry name" value="RIBONUCLEASE H2 SUBUNIT A"/>
    <property type="match status" value="1"/>
</dbReference>
<dbReference type="PANTHER" id="PTHR10954:SF18">
    <property type="entry name" value="RIBONUCLEASE HII"/>
    <property type="match status" value="1"/>
</dbReference>
<dbReference type="Pfam" id="PF01351">
    <property type="entry name" value="RNase_HII"/>
    <property type="match status" value="1"/>
</dbReference>
<dbReference type="SUPFAM" id="SSF53098">
    <property type="entry name" value="Ribonuclease H-like"/>
    <property type="match status" value="1"/>
</dbReference>
<dbReference type="PROSITE" id="PS51975">
    <property type="entry name" value="RNASE_H_2"/>
    <property type="match status" value="1"/>
</dbReference>
<sequence length="210" mass="23192">MPNFSYEDSFSHGSNAIVVGVDEVGYGSIAGPVVAAAVYIPDRNVECIPNIKDSKLLTPKKRDALYKELLSHTVCGTGLASIDEIEEHNILVASHMAMRRALENLNLQRIDLVLVDGSRELKSQWPSKSIINGDELSISIAAASIVAKVTRDNMMRELHDQYPEYHWNKNCGYGTAAHILALKQHGATPLHRKTFAPVKKCIISTKNQDK</sequence>